<gene>
    <name type="primary">PEX21</name>
    <name type="ordered locus">ADL151W</name>
</gene>
<organism>
    <name type="scientific">Eremothecium gossypii (strain ATCC 10895 / CBS 109.51 / FGSC 9923 / NRRL Y-1056)</name>
    <name type="common">Yeast</name>
    <name type="synonym">Ashbya gossypii</name>
    <dbReference type="NCBI Taxonomy" id="284811"/>
    <lineage>
        <taxon>Eukaryota</taxon>
        <taxon>Fungi</taxon>
        <taxon>Dikarya</taxon>
        <taxon>Ascomycota</taxon>
        <taxon>Saccharomycotina</taxon>
        <taxon>Saccharomycetes</taxon>
        <taxon>Saccharomycetales</taxon>
        <taxon>Saccharomycetaceae</taxon>
        <taxon>Eremothecium</taxon>
    </lineage>
</organism>
<protein>
    <recommendedName>
        <fullName>Peroxisomal protein PEX21</fullName>
    </recommendedName>
    <alternativeName>
        <fullName>Peroxin-21</fullName>
    </alternativeName>
</protein>
<feature type="chain" id="PRO_0000301807" description="Peroxisomal protein PEX21">
    <location>
        <begin position="1"/>
        <end position="307"/>
    </location>
</feature>
<feature type="region of interest" description="Disordered" evidence="4">
    <location>
        <begin position="23"/>
        <end position="52"/>
    </location>
</feature>
<feature type="cross-link" description="Glycyl cysteine thioester (Cys-Gly) (interchain with G-Cter in ubiquitin)" evidence="1">
    <location>
        <position position="4"/>
    </location>
</feature>
<keyword id="KW-0963">Cytoplasm</keyword>
<keyword id="KW-0576">Peroxisome</keyword>
<keyword id="KW-0653">Protein transport</keyword>
<keyword id="KW-1185">Reference proteome</keyword>
<keyword id="KW-0882">Thioester bond</keyword>
<keyword id="KW-0813">Transport</keyword>
<keyword id="KW-0832">Ubl conjugation</keyword>
<comment type="function">
    <text evidence="2 3">Mediates peroxisomal import of proteins containing a C-terminal PTS2-type peroxisomal targeting signal via its interaction with PEX7 (By similarity). Interaction with PEX7 only takes place when PEX7 is associated with cargo proteins containing a PTS2 peroxisomal targeting signal (By similarity). PEX7 along with PTS2-containing cargo proteins are then translocated through the PEX13-PEX14 docking complex together with PEX21 (By similarity).</text>
</comment>
<comment type="subunit">
    <text evidence="2">Interacts with PEX7.</text>
</comment>
<comment type="subcellular location">
    <subcellularLocation>
        <location evidence="2">Cytoplasm</location>
        <location evidence="2">Cytosol</location>
    </subcellularLocation>
    <subcellularLocation>
        <location evidence="2">Peroxisome</location>
    </subcellularLocation>
    <text evidence="2">Cycles between the cytosol and the peroxisome.</text>
</comment>
<comment type="PTM">
    <text evidence="1">Monoubiquitinated at Cys-4; acts as a signal for PEX21 extraction and is required for proper export from peroxisomes and recycling.</text>
</comment>
<comment type="similarity">
    <text evidence="5">Belongs to the peroxin-21 family.</text>
</comment>
<proteinExistence type="inferred from homology"/>
<dbReference type="EMBL" id="AE016817">
    <property type="protein sequence ID" value="AAS51769.1"/>
    <property type="molecule type" value="Genomic_DNA"/>
</dbReference>
<dbReference type="RefSeq" id="NP_983945.1">
    <property type="nucleotide sequence ID" value="NM_209298.1"/>
</dbReference>
<dbReference type="FunCoup" id="Q75AS1">
    <property type="interactions" value="32"/>
</dbReference>
<dbReference type="STRING" id="284811.Q75AS1"/>
<dbReference type="EnsemblFungi" id="AAS51769">
    <property type="protein sequence ID" value="AAS51769"/>
    <property type="gene ID" value="AGOS_ADL151W"/>
</dbReference>
<dbReference type="GeneID" id="4620087"/>
<dbReference type="KEGG" id="ago:AGOS_ADL151W"/>
<dbReference type="eggNOG" id="ENOG502S8JP">
    <property type="taxonomic scope" value="Eukaryota"/>
</dbReference>
<dbReference type="HOGENOM" id="CLU_078821_0_0_1"/>
<dbReference type="InParanoid" id="Q75AS1"/>
<dbReference type="OMA" id="CQGSAMQ"/>
<dbReference type="OrthoDB" id="4035272at2759"/>
<dbReference type="Proteomes" id="UP000000591">
    <property type="component" value="Chromosome IV"/>
</dbReference>
<dbReference type="GO" id="GO:0005829">
    <property type="term" value="C:cytosol"/>
    <property type="evidence" value="ECO:0007669"/>
    <property type="project" value="UniProtKB-SubCell"/>
</dbReference>
<dbReference type="GO" id="GO:0005777">
    <property type="term" value="C:peroxisome"/>
    <property type="evidence" value="ECO:0007669"/>
    <property type="project" value="UniProtKB-SubCell"/>
</dbReference>
<dbReference type="GO" id="GO:0015031">
    <property type="term" value="P:protein transport"/>
    <property type="evidence" value="ECO:0007669"/>
    <property type="project" value="UniProtKB-KW"/>
</dbReference>
<dbReference type="Gene3D" id="6.10.280.230">
    <property type="match status" value="1"/>
</dbReference>
<dbReference type="InterPro" id="IPR056940">
    <property type="entry name" value="PEX18_PEX21_C"/>
</dbReference>
<dbReference type="Pfam" id="PF25098">
    <property type="entry name" value="PEX18_PEX21_C"/>
    <property type="match status" value="1"/>
</dbReference>
<evidence type="ECO:0000250" key="1">
    <source>
        <dbReference type="UniProtKB" id="P35056"/>
    </source>
</evidence>
<evidence type="ECO:0000250" key="2">
    <source>
        <dbReference type="UniProtKB" id="P50091"/>
    </source>
</evidence>
<evidence type="ECO:0000250" key="3">
    <source>
        <dbReference type="UniProtKB" id="P50542"/>
    </source>
</evidence>
<evidence type="ECO:0000256" key="4">
    <source>
        <dbReference type="SAM" id="MobiDB-lite"/>
    </source>
</evidence>
<evidence type="ECO:0000305" key="5"/>
<sequence length="307" mass="32999">MSLCQGSAMQKLIAKTEGPMAGVGRVGGFNRPSGGLGQSSAEQQLQARAGERASQNRFMAVLEPQRELGGRMARGDGLQADWVRQFSSMQVEDPLAFSAEYQRAYAGYEQRQAARPAARVLGYGGSMFMPTMPQQQLQQQVAPQQTAQAALQEAELERYLEREFDVLEGELAPPEVPEALSAPLLDHEQLGFQESAKAIYATLSAPIHKDKFGASKFMGLMRQVSTGDVTLSKSESGYTGLHMTAGGEAVGAEYRAVTDEVVQVPEVAAALPLAGEERSLASQMEDLLNKVDIAGLSSNEAAMRILS</sequence>
<reference key="1">
    <citation type="journal article" date="2004" name="Science">
        <title>The Ashbya gossypii genome as a tool for mapping the ancient Saccharomyces cerevisiae genome.</title>
        <authorList>
            <person name="Dietrich F.S."/>
            <person name="Voegeli S."/>
            <person name="Brachat S."/>
            <person name="Lerch A."/>
            <person name="Gates K."/>
            <person name="Steiner S."/>
            <person name="Mohr C."/>
            <person name="Poehlmann R."/>
            <person name="Luedi P."/>
            <person name="Choi S."/>
            <person name="Wing R.A."/>
            <person name="Flavier A."/>
            <person name="Gaffney T.D."/>
            <person name="Philippsen P."/>
        </authorList>
    </citation>
    <scope>NUCLEOTIDE SEQUENCE [LARGE SCALE GENOMIC DNA]</scope>
    <source>
        <strain>ATCC 10895 / CBS 109.51 / FGSC 9923 / NRRL Y-1056</strain>
    </source>
</reference>
<reference key="2">
    <citation type="journal article" date="2013" name="G3 (Bethesda)">
        <title>Genomes of Ashbya fungi isolated from insects reveal four mating-type loci, numerous translocations, lack of transposons, and distinct gene duplications.</title>
        <authorList>
            <person name="Dietrich F.S."/>
            <person name="Voegeli S."/>
            <person name="Kuo S."/>
            <person name="Philippsen P."/>
        </authorList>
    </citation>
    <scope>GENOME REANNOTATION</scope>
    <source>
        <strain>ATCC 10895 / CBS 109.51 / FGSC 9923 / NRRL Y-1056</strain>
    </source>
</reference>
<accession>Q75AS1</accession>
<name>PEX21_EREGS</name>